<protein>
    <recommendedName>
        <fullName>ATP-dependent DNA helicase RecG</fullName>
        <ecNumber evidence="1">5.6.2.4</ecNumber>
    </recommendedName>
    <alternativeName>
        <fullName>DNA branch migration protein RecG</fullName>
    </alternativeName>
    <alternativeName>
        <fullName>Probable DNA 3'-5' helicase RecG</fullName>
    </alternativeName>
</protein>
<dbReference type="EC" id="5.6.2.4" evidence="1"/>
<dbReference type="EMBL" id="U70661">
    <property type="protein sequence ID" value="AAB38707.1"/>
    <property type="molecule type" value="Genomic_DNA"/>
</dbReference>
<dbReference type="EMBL" id="AE000520">
    <property type="protein sequence ID" value="AAC65656.1"/>
    <property type="molecule type" value="Genomic_DNA"/>
</dbReference>
<dbReference type="PIR" id="D71292">
    <property type="entry name" value="D71292"/>
</dbReference>
<dbReference type="RefSeq" id="WP_010882132.1">
    <property type="nucleotide sequence ID" value="NC_021490.2"/>
</dbReference>
<dbReference type="SMR" id="P96130"/>
<dbReference type="IntAct" id="P96130">
    <property type="interactions" value="5"/>
</dbReference>
<dbReference type="STRING" id="243276.TP_0687"/>
<dbReference type="EnsemblBacteria" id="AAC65656">
    <property type="protein sequence ID" value="AAC65656"/>
    <property type="gene ID" value="TP_0687"/>
</dbReference>
<dbReference type="GeneID" id="93876456"/>
<dbReference type="KEGG" id="tpa:TP_0687"/>
<dbReference type="KEGG" id="tpw:TPANIC_0687"/>
<dbReference type="eggNOG" id="COG1200">
    <property type="taxonomic scope" value="Bacteria"/>
</dbReference>
<dbReference type="HOGENOM" id="CLU_005122_7_1_12"/>
<dbReference type="OrthoDB" id="9804325at2"/>
<dbReference type="Proteomes" id="UP000000811">
    <property type="component" value="Chromosome"/>
</dbReference>
<dbReference type="GO" id="GO:0005524">
    <property type="term" value="F:ATP binding"/>
    <property type="evidence" value="ECO:0007669"/>
    <property type="project" value="UniProtKB-KW"/>
</dbReference>
<dbReference type="GO" id="GO:0016887">
    <property type="term" value="F:ATP hydrolysis activity"/>
    <property type="evidence" value="ECO:0007669"/>
    <property type="project" value="RHEA"/>
</dbReference>
<dbReference type="GO" id="GO:0003677">
    <property type="term" value="F:DNA binding"/>
    <property type="evidence" value="ECO:0007669"/>
    <property type="project" value="UniProtKB-KW"/>
</dbReference>
<dbReference type="GO" id="GO:0003678">
    <property type="term" value="F:DNA helicase activity"/>
    <property type="evidence" value="ECO:0007669"/>
    <property type="project" value="InterPro"/>
</dbReference>
<dbReference type="GO" id="GO:0006310">
    <property type="term" value="P:DNA recombination"/>
    <property type="evidence" value="ECO:0007669"/>
    <property type="project" value="UniProtKB-KW"/>
</dbReference>
<dbReference type="GO" id="GO:0006281">
    <property type="term" value="P:DNA repair"/>
    <property type="evidence" value="ECO:0007669"/>
    <property type="project" value="UniProtKB-KW"/>
</dbReference>
<dbReference type="CDD" id="cd17992">
    <property type="entry name" value="DEXHc_RecG"/>
    <property type="match status" value="1"/>
</dbReference>
<dbReference type="CDD" id="cd04488">
    <property type="entry name" value="RecG_wedge_OBF"/>
    <property type="match status" value="1"/>
</dbReference>
<dbReference type="CDD" id="cd18811">
    <property type="entry name" value="SF2_C_RecG"/>
    <property type="match status" value="1"/>
</dbReference>
<dbReference type="Gene3D" id="3.40.50.300">
    <property type="entry name" value="P-loop containing nucleotide triphosphate hydrolases"/>
    <property type="match status" value="2"/>
</dbReference>
<dbReference type="InterPro" id="IPR004609">
    <property type="entry name" value="ATP-dep_DNA_helicase_RecG"/>
</dbReference>
<dbReference type="InterPro" id="IPR011545">
    <property type="entry name" value="DEAD/DEAH_box_helicase_dom"/>
</dbReference>
<dbReference type="InterPro" id="IPR014001">
    <property type="entry name" value="Helicase_ATP-bd"/>
</dbReference>
<dbReference type="InterPro" id="IPR001650">
    <property type="entry name" value="Helicase_C-like"/>
</dbReference>
<dbReference type="InterPro" id="IPR012340">
    <property type="entry name" value="NA-bd_OB-fold"/>
</dbReference>
<dbReference type="InterPro" id="IPR027417">
    <property type="entry name" value="P-loop_NTPase"/>
</dbReference>
<dbReference type="InterPro" id="IPR047112">
    <property type="entry name" value="RecG/Mfd"/>
</dbReference>
<dbReference type="InterPro" id="IPR045562">
    <property type="entry name" value="RecG_dom3_C"/>
</dbReference>
<dbReference type="InterPro" id="IPR033454">
    <property type="entry name" value="RecG_wedge"/>
</dbReference>
<dbReference type="NCBIfam" id="NF008165">
    <property type="entry name" value="PRK10917.1-3"/>
    <property type="match status" value="1"/>
</dbReference>
<dbReference type="NCBIfam" id="TIGR00643">
    <property type="entry name" value="recG"/>
    <property type="match status" value="1"/>
</dbReference>
<dbReference type="PANTHER" id="PTHR47964">
    <property type="entry name" value="ATP-DEPENDENT DNA HELICASE HOMOLOG RECG, CHLOROPLASTIC"/>
    <property type="match status" value="1"/>
</dbReference>
<dbReference type="PANTHER" id="PTHR47964:SF1">
    <property type="entry name" value="ATP-DEPENDENT DNA HELICASE HOMOLOG RECG, CHLOROPLASTIC"/>
    <property type="match status" value="1"/>
</dbReference>
<dbReference type="Pfam" id="PF00270">
    <property type="entry name" value="DEAD"/>
    <property type="match status" value="1"/>
</dbReference>
<dbReference type="Pfam" id="PF00271">
    <property type="entry name" value="Helicase_C"/>
    <property type="match status" value="1"/>
</dbReference>
<dbReference type="Pfam" id="PF19833">
    <property type="entry name" value="RecG_dom3_C"/>
    <property type="match status" value="1"/>
</dbReference>
<dbReference type="Pfam" id="PF17191">
    <property type="entry name" value="RecG_wedge"/>
    <property type="match status" value="1"/>
</dbReference>
<dbReference type="SMART" id="SM00487">
    <property type="entry name" value="DEXDc"/>
    <property type="match status" value="1"/>
</dbReference>
<dbReference type="SMART" id="SM00490">
    <property type="entry name" value="HELICc"/>
    <property type="match status" value="1"/>
</dbReference>
<dbReference type="SUPFAM" id="SSF50249">
    <property type="entry name" value="Nucleic acid-binding proteins"/>
    <property type="match status" value="1"/>
</dbReference>
<dbReference type="SUPFAM" id="SSF52540">
    <property type="entry name" value="P-loop containing nucleoside triphosphate hydrolases"/>
    <property type="match status" value="1"/>
</dbReference>
<dbReference type="PROSITE" id="PS51192">
    <property type="entry name" value="HELICASE_ATP_BIND_1"/>
    <property type="match status" value="1"/>
</dbReference>
<dbReference type="PROSITE" id="PS51194">
    <property type="entry name" value="HELICASE_CTER"/>
    <property type="match status" value="1"/>
</dbReference>
<feature type="chain" id="PRO_0000102161" description="ATP-dependent DNA helicase RecG">
    <location>
        <begin position="1"/>
        <end position="686"/>
    </location>
</feature>
<feature type="domain" description="Helicase ATP-binding" evidence="3">
    <location>
        <begin position="285"/>
        <end position="453"/>
    </location>
</feature>
<feature type="domain" description="Helicase C-terminal" evidence="4">
    <location>
        <begin position="472"/>
        <end position="632"/>
    </location>
</feature>
<feature type="region of interest" description="Wedge domain" evidence="2">
    <location>
        <begin position="47"/>
        <end position="141"/>
    </location>
</feature>
<feature type="short sequence motif" description="DEAH box" evidence="3">
    <location>
        <begin position="399"/>
        <end position="402"/>
    </location>
</feature>
<feature type="binding site" evidence="3">
    <location>
        <begin position="298"/>
        <end position="305"/>
    </location>
    <ligand>
        <name>ATP</name>
        <dbReference type="ChEBI" id="CHEBI:30616"/>
    </ligand>
</feature>
<comment type="function">
    <text evidence="1">Plays a critical role in recombination and DNA repair. Helps process Holliday junction intermediates to mature products by catalyzing branch migration. Has replication fork regression activity, unwinds stalled or blocked replication forks to make a HJ that can be resolved. Has a DNA unwinding activity characteristic of a DNA helicase with 3'-5' polarity (By similarity).</text>
</comment>
<comment type="catalytic activity">
    <reaction evidence="1">
        <text>Couples ATP hydrolysis with the unwinding of duplex DNA by translocating in the 3'-5' direction.</text>
        <dbReference type="EC" id="5.6.2.4"/>
    </reaction>
</comment>
<comment type="catalytic activity">
    <reaction evidence="1">
        <text>ATP + H2O = ADP + phosphate + H(+)</text>
        <dbReference type="Rhea" id="RHEA:13065"/>
        <dbReference type="ChEBI" id="CHEBI:15377"/>
        <dbReference type="ChEBI" id="CHEBI:15378"/>
        <dbReference type="ChEBI" id="CHEBI:30616"/>
        <dbReference type="ChEBI" id="CHEBI:43474"/>
        <dbReference type="ChEBI" id="CHEBI:456216"/>
        <dbReference type="EC" id="5.6.2.4"/>
    </reaction>
</comment>
<comment type="subunit">
    <text evidence="2">Monomer (By similarity).</text>
</comment>
<comment type="domain">
    <text evidence="2">The wedge domain within the N-terminus inserts into the replication fork junction, where the lagging and leading strand split (By similarity).</text>
</comment>
<comment type="similarity">
    <text evidence="5">Belongs to the helicase family. RecG subfamily.</text>
</comment>
<organism>
    <name type="scientific">Treponema pallidum (strain Nichols)</name>
    <dbReference type="NCBI Taxonomy" id="243276"/>
    <lineage>
        <taxon>Bacteria</taxon>
        <taxon>Pseudomonadati</taxon>
        <taxon>Spirochaetota</taxon>
        <taxon>Spirochaetia</taxon>
        <taxon>Spirochaetales</taxon>
        <taxon>Treponemataceae</taxon>
        <taxon>Treponema</taxon>
    </lineage>
</organism>
<proteinExistence type="inferred from homology"/>
<sequence>MLIGEIKEPVSVLKGTGKVVLAQLERLNISTIGDILSYWPRLWEDRTQEQMFSQWTLAHRLQVRVSVTAHCWFGFGKSKTLKLVVQDGQGCVAELLCFRRNFLHFMFPVGSEAVVYGSFYEKDGLLESSSFDIEKIDCIEKKILPVYPLTKGLKQMKLRMLICAAMDQWIGTVDSELPKPILEKYHLLTKRDVLLSMHTPRTLDDVAKGKHSLIFEEFFSLQMTIGMRSLQKRGRLPLTQGESDQQSAIPSVVSELSLLQKKLHRCLPFELTVDQKRVITEITQDLEREEPMARLIQGDVGSGKTLVAFFSCLKIIEQGGQVALLAPTELLARQHADTAARLLAPIGIRLAFLTGNVKSEGRAYLLEALVAGEINLVVGTHALFSKSVRYHDLRLVIIDEQHRFGVLQRSALIQKGREGNPQGKTPHIIMMSATPIPRTLALSVFGDLDISIIKSMPGGRKPVITYIARKTKAEKVYEFVGNEIEKGRQAYFIYPRIHDIGLTDLKSVQCMYMYLKNYFARYAVAMIHSKMTEEEQQRIMKYFSEGTVHILVATSVVEVGVDVPNANCIVIEHAERFGLSALHQLRGRVGRGDVQSYCFLMHGDEMTECAKRRLKIMGSTADGFVIAEEDLKLRGPGDVGDTKNFEQSGYSGFRVADPVRDYPILQVAREAAFELLRKEKGSSEAR</sequence>
<reference key="1">
    <citation type="submission" date="1996-09" db="EMBL/GenBank/DDBJ databases">
        <authorList>
            <person name="Stamm L.V."/>
            <person name="Barnes N.Y."/>
        </authorList>
    </citation>
    <scope>NUCLEOTIDE SEQUENCE [GENOMIC DNA]</scope>
    <source>
        <strain>Nichols</strain>
    </source>
</reference>
<reference key="2">
    <citation type="journal article" date="1998" name="Science">
        <title>Complete genome sequence of Treponema pallidum, the syphilis spirochete.</title>
        <authorList>
            <person name="Fraser C.M."/>
            <person name="Norris S.J."/>
            <person name="Weinstock G.M."/>
            <person name="White O."/>
            <person name="Sutton G.G."/>
            <person name="Dodson R.J."/>
            <person name="Gwinn M.L."/>
            <person name="Hickey E.K."/>
            <person name="Clayton R.A."/>
            <person name="Ketchum K.A."/>
            <person name="Sodergren E."/>
            <person name="Hardham J.M."/>
            <person name="McLeod M.P."/>
            <person name="Salzberg S.L."/>
            <person name="Peterson J.D."/>
            <person name="Khalak H.G."/>
            <person name="Richardson D.L."/>
            <person name="Howell J.K."/>
            <person name="Chidambaram M."/>
            <person name="Utterback T.R."/>
            <person name="McDonald L.A."/>
            <person name="Artiach P."/>
            <person name="Bowman C."/>
            <person name="Cotton M.D."/>
            <person name="Fujii C."/>
            <person name="Garland S.A."/>
            <person name="Hatch B."/>
            <person name="Horst K."/>
            <person name="Roberts K.M."/>
            <person name="Sandusky M."/>
            <person name="Weidman J.F."/>
            <person name="Smith H.O."/>
            <person name="Venter J.C."/>
        </authorList>
    </citation>
    <scope>NUCLEOTIDE SEQUENCE [LARGE SCALE GENOMIC DNA]</scope>
    <source>
        <strain>Nichols</strain>
    </source>
</reference>
<keyword id="KW-0067">ATP-binding</keyword>
<keyword id="KW-0227">DNA damage</keyword>
<keyword id="KW-0233">DNA recombination</keyword>
<keyword id="KW-0234">DNA repair</keyword>
<keyword id="KW-0238">DNA-binding</keyword>
<keyword id="KW-0347">Helicase</keyword>
<keyword id="KW-0378">Hydrolase</keyword>
<keyword id="KW-0413">Isomerase</keyword>
<keyword id="KW-0547">Nucleotide-binding</keyword>
<keyword id="KW-1185">Reference proteome</keyword>
<gene>
    <name type="primary">recG</name>
    <name type="ordered locus">TP_0687</name>
</gene>
<evidence type="ECO:0000250" key="1">
    <source>
        <dbReference type="UniProtKB" id="P24230"/>
    </source>
</evidence>
<evidence type="ECO:0000250" key="2">
    <source>
        <dbReference type="UniProtKB" id="Q9WY48"/>
    </source>
</evidence>
<evidence type="ECO:0000255" key="3">
    <source>
        <dbReference type="PROSITE-ProRule" id="PRU00541"/>
    </source>
</evidence>
<evidence type="ECO:0000255" key="4">
    <source>
        <dbReference type="PROSITE-ProRule" id="PRU00542"/>
    </source>
</evidence>
<evidence type="ECO:0000305" key="5"/>
<name>RECG_TREPA</name>
<accession>P96130</accession>